<comment type="function">
    <text evidence="2">Folate-binding protein involved in regulating the level of ATP-DnaA and in the modification of some tRNAs. It is probably a key factor in regulatory networks that act via tRNA modification, such as initiation of chromosomal replication.</text>
</comment>
<comment type="subcellular location">
    <subcellularLocation>
        <location evidence="2">Cytoplasm</location>
    </subcellularLocation>
</comment>
<comment type="similarity">
    <text evidence="2">Belongs to the tRNA-modifying YgfZ family.</text>
</comment>
<organism>
    <name type="scientific">Shigella sonnei (strain Ss046)</name>
    <dbReference type="NCBI Taxonomy" id="300269"/>
    <lineage>
        <taxon>Bacteria</taxon>
        <taxon>Pseudomonadati</taxon>
        <taxon>Pseudomonadota</taxon>
        <taxon>Gammaproteobacteria</taxon>
        <taxon>Enterobacterales</taxon>
        <taxon>Enterobacteriaceae</taxon>
        <taxon>Shigella</taxon>
    </lineage>
</organism>
<proteinExistence type="inferred from homology"/>
<sequence length="326" mass="36101">MAFTPFPPRQPTASARLPLTLMTLDDWALATITGADSEKYMQGQVTADVSQMAEDQHLLAAHCDAKGKMWSNLRLFRDGDGFAWIERRSVREPQLTELKKYAVFSKVTIAPDDEHVLLGVAGFQARAALANIFSELPSKEKQVVKEGATTLLWFEYPAERFLIVTDEATANMLTDKLRGEAELNNSQQWLALNIEAGFPVIDAANSGQFIPQATNLQALGGISFKKGCYTGQEMVARAKFRGANKRALWLLAGSASRLPEAGEDLELKMGENWRRTGTVLAAVKLEDGQVVVQVVMNNDMEPDSIFRVRDDANTLHIEPLPYSLEE</sequence>
<accession>Q3YXX2</accession>
<gene>
    <name evidence="2" type="primary">ygfZ</name>
    <name type="ordered locus">SSON_3051</name>
</gene>
<name>YGFZ_SHISS</name>
<evidence type="ECO:0000250" key="1"/>
<evidence type="ECO:0000255" key="2">
    <source>
        <dbReference type="HAMAP-Rule" id="MF_01175"/>
    </source>
</evidence>
<dbReference type="EMBL" id="CP000038">
    <property type="protein sequence ID" value="AAZ89640.1"/>
    <property type="molecule type" value="Genomic_DNA"/>
</dbReference>
<dbReference type="RefSeq" id="WP_000886060.1">
    <property type="nucleotide sequence ID" value="NC_007384.1"/>
</dbReference>
<dbReference type="SMR" id="Q3YXX2"/>
<dbReference type="GeneID" id="93779104"/>
<dbReference type="KEGG" id="ssn:SSON_3051"/>
<dbReference type="HOGENOM" id="CLU_007884_6_1_6"/>
<dbReference type="Proteomes" id="UP000002529">
    <property type="component" value="Chromosome"/>
</dbReference>
<dbReference type="GO" id="GO:0005737">
    <property type="term" value="C:cytoplasm"/>
    <property type="evidence" value="ECO:0007669"/>
    <property type="project" value="UniProtKB-SubCell"/>
</dbReference>
<dbReference type="GO" id="GO:0005542">
    <property type="term" value="F:folic acid binding"/>
    <property type="evidence" value="ECO:0007669"/>
    <property type="project" value="UniProtKB-UniRule"/>
</dbReference>
<dbReference type="GO" id="GO:0016226">
    <property type="term" value="P:iron-sulfur cluster assembly"/>
    <property type="evidence" value="ECO:0007669"/>
    <property type="project" value="TreeGrafter"/>
</dbReference>
<dbReference type="GO" id="GO:0009451">
    <property type="term" value="P:RNA modification"/>
    <property type="evidence" value="ECO:0007669"/>
    <property type="project" value="InterPro"/>
</dbReference>
<dbReference type="GO" id="GO:0008033">
    <property type="term" value="P:tRNA processing"/>
    <property type="evidence" value="ECO:0007669"/>
    <property type="project" value="UniProtKB-UniRule"/>
</dbReference>
<dbReference type="FunFam" id="2.40.30.160:FF:000001">
    <property type="entry name" value="tRNA-modifying protein YgfZ"/>
    <property type="match status" value="1"/>
</dbReference>
<dbReference type="FunFam" id="3.30.70.1400:FF:000002">
    <property type="entry name" value="tRNA-modifying protein YgfZ"/>
    <property type="match status" value="1"/>
</dbReference>
<dbReference type="FunFam" id="3.30.70.1630:FF:000001">
    <property type="entry name" value="tRNA-modifying protein YgfZ"/>
    <property type="match status" value="1"/>
</dbReference>
<dbReference type="Gene3D" id="2.40.30.160">
    <property type="match status" value="1"/>
</dbReference>
<dbReference type="Gene3D" id="3.30.70.1630">
    <property type="match status" value="1"/>
</dbReference>
<dbReference type="Gene3D" id="3.30.70.1400">
    <property type="entry name" value="Aminomethyltransferase beta-barrel domains"/>
    <property type="match status" value="1"/>
</dbReference>
<dbReference type="HAMAP" id="MF_01175">
    <property type="entry name" value="tRNA_modifying_YgfZ"/>
    <property type="match status" value="1"/>
</dbReference>
<dbReference type="InterPro" id="IPR006222">
    <property type="entry name" value="GCV_T_N"/>
</dbReference>
<dbReference type="InterPro" id="IPR029043">
    <property type="entry name" value="GcvT/YgfZ_C"/>
</dbReference>
<dbReference type="InterPro" id="IPR023758">
    <property type="entry name" value="tRNA-modifying_YgfZ"/>
</dbReference>
<dbReference type="InterPro" id="IPR045179">
    <property type="entry name" value="YgfZ/GcvT"/>
</dbReference>
<dbReference type="InterPro" id="IPR017703">
    <property type="entry name" value="YgfZ/GcvT_CS"/>
</dbReference>
<dbReference type="InterPro" id="IPR048451">
    <property type="entry name" value="YgfZ_barrel"/>
</dbReference>
<dbReference type="NCBIfam" id="NF007110">
    <property type="entry name" value="PRK09559.1"/>
    <property type="match status" value="1"/>
</dbReference>
<dbReference type="NCBIfam" id="TIGR03317">
    <property type="entry name" value="ygfZ_signature"/>
    <property type="match status" value="1"/>
</dbReference>
<dbReference type="PANTHER" id="PTHR22602">
    <property type="entry name" value="TRANSFERASE CAF17, MITOCHONDRIAL-RELATED"/>
    <property type="match status" value="1"/>
</dbReference>
<dbReference type="PANTHER" id="PTHR22602:SF0">
    <property type="entry name" value="TRANSFERASE CAF17, MITOCHONDRIAL-RELATED"/>
    <property type="match status" value="1"/>
</dbReference>
<dbReference type="Pfam" id="PF01571">
    <property type="entry name" value="GCV_T"/>
    <property type="match status" value="1"/>
</dbReference>
<dbReference type="Pfam" id="PF21130">
    <property type="entry name" value="YgfZ_barrel"/>
    <property type="match status" value="1"/>
</dbReference>
<dbReference type="SUPFAM" id="SSF101790">
    <property type="entry name" value="Aminomethyltransferase beta-barrel domain"/>
    <property type="match status" value="1"/>
</dbReference>
<dbReference type="SUPFAM" id="SSF103025">
    <property type="entry name" value="Folate-binding domain"/>
    <property type="match status" value="1"/>
</dbReference>
<feature type="initiator methionine" description="Removed" evidence="1">
    <location>
        <position position="1"/>
    </location>
</feature>
<feature type="chain" id="PRO_0000262901" description="tRNA-modifying protein YgfZ">
    <location>
        <begin position="2"/>
        <end position="326"/>
    </location>
</feature>
<feature type="binding site" evidence="2">
    <location>
        <position position="27"/>
    </location>
    <ligand>
        <name>folate</name>
        <dbReference type="ChEBI" id="CHEBI:62501"/>
    </ligand>
</feature>
<feature type="binding site" evidence="2">
    <location>
        <position position="189"/>
    </location>
    <ligand>
        <name>folate</name>
        <dbReference type="ChEBI" id="CHEBI:62501"/>
    </ligand>
</feature>
<keyword id="KW-0963">Cytoplasm</keyword>
<keyword id="KW-0290">Folate-binding</keyword>
<keyword id="KW-1185">Reference proteome</keyword>
<keyword id="KW-0819">tRNA processing</keyword>
<reference key="1">
    <citation type="journal article" date="2005" name="Nucleic Acids Res.">
        <title>Genome dynamics and diversity of Shigella species, the etiologic agents of bacillary dysentery.</title>
        <authorList>
            <person name="Yang F."/>
            <person name="Yang J."/>
            <person name="Zhang X."/>
            <person name="Chen L."/>
            <person name="Jiang Y."/>
            <person name="Yan Y."/>
            <person name="Tang X."/>
            <person name="Wang J."/>
            <person name="Xiong Z."/>
            <person name="Dong J."/>
            <person name="Xue Y."/>
            <person name="Zhu Y."/>
            <person name="Xu X."/>
            <person name="Sun L."/>
            <person name="Chen S."/>
            <person name="Nie H."/>
            <person name="Peng J."/>
            <person name="Xu J."/>
            <person name="Wang Y."/>
            <person name="Yuan Z."/>
            <person name="Wen Y."/>
            <person name="Yao Z."/>
            <person name="Shen Y."/>
            <person name="Qiang B."/>
            <person name="Hou Y."/>
            <person name="Yu J."/>
            <person name="Jin Q."/>
        </authorList>
    </citation>
    <scope>NUCLEOTIDE SEQUENCE [LARGE SCALE GENOMIC DNA]</scope>
    <source>
        <strain>Ss046</strain>
    </source>
</reference>
<protein>
    <recommendedName>
        <fullName evidence="2">tRNA-modifying protein YgfZ</fullName>
    </recommendedName>
</protein>